<keyword id="KW-0521">NADP</keyword>
<keyword id="KW-0560">Oxidoreductase</keyword>
<keyword id="KW-0627">Porphyrin biosynthesis</keyword>
<keyword id="KW-1185">Reference proteome</keyword>
<protein>
    <recommendedName>
        <fullName evidence="1">Glutamyl-tRNA reductase</fullName>
        <shortName evidence="1">GluTR</shortName>
        <ecNumber evidence="1">1.2.1.70</ecNumber>
    </recommendedName>
</protein>
<feature type="chain" id="PRO_0000335064" description="Glutamyl-tRNA reductase">
    <location>
        <begin position="1"/>
        <end position="440"/>
    </location>
</feature>
<feature type="active site" description="Nucleophile" evidence="1">
    <location>
        <position position="41"/>
    </location>
</feature>
<feature type="binding site" evidence="1">
    <location>
        <begin position="40"/>
        <end position="43"/>
    </location>
    <ligand>
        <name>substrate</name>
    </ligand>
</feature>
<feature type="binding site" evidence="1">
    <location>
        <position position="100"/>
    </location>
    <ligand>
        <name>substrate</name>
    </ligand>
</feature>
<feature type="binding site" evidence="1">
    <location>
        <begin position="105"/>
        <end position="107"/>
    </location>
    <ligand>
        <name>substrate</name>
    </ligand>
</feature>
<feature type="binding site" evidence="1">
    <location>
        <position position="111"/>
    </location>
    <ligand>
        <name>substrate</name>
    </ligand>
</feature>
<feature type="binding site" evidence="1">
    <location>
        <begin position="181"/>
        <end position="186"/>
    </location>
    <ligand>
        <name>NADP(+)</name>
        <dbReference type="ChEBI" id="CHEBI:58349"/>
    </ligand>
</feature>
<feature type="site" description="Important for activity" evidence="1">
    <location>
        <position position="90"/>
    </location>
</feature>
<comment type="function">
    <text evidence="1">Catalyzes the NADPH-dependent reduction of glutamyl-tRNA(Glu) to glutamate 1-semialdehyde (GSA).</text>
</comment>
<comment type="catalytic activity">
    <reaction evidence="1">
        <text>(S)-4-amino-5-oxopentanoate + tRNA(Glu) + NADP(+) = L-glutamyl-tRNA(Glu) + NADPH + H(+)</text>
        <dbReference type="Rhea" id="RHEA:12344"/>
        <dbReference type="Rhea" id="RHEA-COMP:9663"/>
        <dbReference type="Rhea" id="RHEA-COMP:9680"/>
        <dbReference type="ChEBI" id="CHEBI:15378"/>
        <dbReference type="ChEBI" id="CHEBI:57501"/>
        <dbReference type="ChEBI" id="CHEBI:57783"/>
        <dbReference type="ChEBI" id="CHEBI:58349"/>
        <dbReference type="ChEBI" id="CHEBI:78442"/>
        <dbReference type="ChEBI" id="CHEBI:78520"/>
        <dbReference type="EC" id="1.2.1.70"/>
    </reaction>
</comment>
<comment type="pathway">
    <text evidence="1">Porphyrin-containing compound metabolism; protoporphyrin-IX biosynthesis; 5-aminolevulinate from L-glutamyl-tRNA(Glu): step 1/2.</text>
</comment>
<comment type="subunit">
    <text evidence="1">Homodimer.</text>
</comment>
<comment type="domain">
    <text evidence="1">Possesses an unusual extended V-shaped dimeric structure with each monomer consisting of three distinct domains arranged along a curved 'spinal' alpha-helix. The N-terminal catalytic domain specifically recognizes the glutamate moiety of the substrate. The second domain is the NADPH-binding domain, and the third C-terminal domain is responsible for dimerization.</text>
</comment>
<comment type="miscellaneous">
    <text evidence="1">During catalysis, the active site Cys acts as a nucleophile attacking the alpha-carbonyl group of tRNA-bound glutamate with the formation of a thioester intermediate between enzyme and glutamate, and the concomitant release of tRNA(Glu). The thioester intermediate is finally reduced by direct hydride transfer from NADPH, to form the product GSA.</text>
</comment>
<comment type="similarity">
    <text evidence="1">Belongs to the glutamyl-tRNA reductase family.</text>
</comment>
<evidence type="ECO:0000255" key="1">
    <source>
        <dbReference type="HAMAP-Rule" id="MF_00087"/>
    </source>
</evidence>
<proteinExistence type="inferred from homology"/>
<gene>
    <name evidence="1" type="primary">hemA</name>
    <name type="ordered locus">RSal33209_1218</name>
</gene>
<sequence length="440" mass="45781">MNVVVLFSLVATHADIDLETVARLSAGSAAVSTSTVVLATCNRFEIYSAAENPATARAEMEAALAHATGFAPSLVSSSFKLLTGTDVAKHLFAVASGLDSAVVGEREIAGQVRRALIDAQTAFPVPGPLVRLFQTASRTAKDVGSQTALGSQGRSIVSVALDLAGDSSATAWDQRKAVVFGTGAYAGVTMALLRERGVSDLSVYSSSGRAADFVASRGGTAAESLEEALGSADLVIGCSGSDQRVSAETLADIRRRTGTAGEPLSVIDLALSRDFDPAITELPGVELLTLETVRLAAPSEQESALLQTQVIVSRAAADFELSIATRSVDTAIVALRKHTMAVLDAEMERVRAQHGCTAAAEEVEFALRRMVKQLLHGPTVRARELAAAGQQAEYIAALQSLYGIELESPTPAAQPVESIPAVEPASCPVNHNAVDRSQSA</sequence>
<organism>
    <name type="scientific">Renibacterium salmoninarum (strain ATCC 33209 / DSM 20767 / JCM 11484 / NBRC 15589 / NCIMB 2235)</name>
    <dbReference type="NCBI Taxonomy" id="288705"/>
    <lineage>
        <taxon>Bacteria</taxon>
        <taxon>Bacillati</taxon>
        <taxon>Actinomycetota</taxon>
        <taxon>Actinomycetes</taxon>
        <taxon>Micrococcales</taxon>
        <taxon>Micrococcaceae</taxon>
        <taxon>Renibacterium</taxon>
    </lineage>
</organism>
<accession>A9WPH1</accession>
<name>HEM1_RENSM</name>
<dbReference type="EC" id="1.2.1.70" evidence="1"/>
<dbReference type="EMBL" id="CP000910">
    <property type="protein sequence ID" value="ABY22956.1"/>
    <property type="molecule type" value="Genomic_DNA"/>
</dbReference>
<dbReference type="SMR" id="A9WPH1"/>
<dbReference type="STRING" id="288705.RSal33209_1218"/>
<dbReference type="KEGG" id="rsa:RSal33209_1218"/>
<dbReference type="eggNOG" id="COG0373">
    <property type="taxonomic scope" value="Bacteria"/>
</dbReference>
<dbReference type="HOGENOM" id="CLU_035113_4_1_11"/>
<dbReference type="UniPathway" id="UPA00251">
    <property type="reaction ID" value="UER00316"/>
</dbReference>
<dbReference type="Proteomes" id="UP000002007">
    <property type="component" value="Chromosome"/>
</dbReference>
<dbReference type="GO" id="GO:0008883">
    <property type="term" value="F:glutamyl-tRNA reductase activity"/>
    <property type="evidence" value="ECO:0007669"/>
    <property type="project" value="UniProtKB-UniRule"/>
</dbReference>
<dbReference type="GO" id="GO:0050661">
    <property type="term" value="F:NADP binding"/>
    <property type="evidence" value="ECO:0007669"/>
    <property type="project" value="InterPro"/>
</dbReference>
<dbReference type="GO" id="GO:0019353">
    <property type="term" value="P:protoporphyrinogen IX biosynthetic process from glutamate"/>
    <property type="evidence" value="ECO:0007669"/>
    <property type="project" value="TreeGrafter"/>
</dbReference>
<dbReference type="Gene3D" id="3.30.460.30">
    <property type="entry name" value="Glutamyl-tRNA reductase, N-terminal domain"/>
    <property type="match status" value="1"/>
</dbReference>
<dbReference type="Gene3D" id="3.40.50.720">
    <property type="entry name" value="NAD(P)-binding Rossmann-like Domain"/>
    <property type="match status" value="1"/>
</dbReference>
<dbReference type="HAMAP" id="MF_00087">
    <property type="entry name" value="Glu_tRNA_reductase"/>
    <property type="match status" value="1"/>
</dbReference>
<dbReference type="InterPro" id="IPR000343">
    <property type="entry name" value="4pyrrol_synth_GluRdtase"/>
</dbReference>
<dbReference type="InterPro" id="IPR015896">
    <property type="entry name" value="4pyrrol_synth_GluRdtase_dimer"/>
</dbReference>
<dbReference type="InterPro" id="IPR015895">
    <property type="entry name" value="4pyrrol_synth_GluRdtase_N"/>
</dbReference>
<dbReference type="InterPro" id="IPR018214">
    <property type="entry name" value="GluRdtase_CS"/>
</dbReference>
<dbReference type="InterPro" id="IPR036453">
    <property type="entry name" value="GluRdtase_dimer_dom_sf"/>
</dbReference>
<dbReference type="InterPro" id="IPR036343">
    <property type="entry name" value="GluRdtase_N_sf"/>
</dbReference>
<dbReference type="InterPro" id="IPR036291">
    <property type="entry name" value="NAD(P)-bd_dom_sf"/>
</dbReference>
<dbReference type="InterPro" id="IPR006151">
    <property type="entry name" value="Shikm_DH/Glu-tRNA_Rdtase"/>
</dbReference>
<dbReference type="NCBIfam" id="NF000750">
    <property type="entry name" value="PRK00045.3-4"/>
    <property type="match status" value="1"/>
</dbReference>
<dbReference type="PANTHER" id="PTHR43013">
    <property type="entry name" value="GLUTAMYL-TRNA REDUCTASE"/>
    <property type="match status" value="1"/>
</dbReference>
<dbReference type="PANTHER" id="PTHR43013:SF1">
    <property type="entry name" value="GLUTAMYL-TRNA REDUCTASE"/>
    <property type="match status" value="1"/>
</dbReference>
<dbReference type="Pfam" id="PF00745">
    <property type="entry name" value="GlutR_dimer"/>
    <property type="match status" value="1"/>
</dbReference>
<dbReference type="Pfam" id="PF05201">
    <property type="entry name" value="GlutR_N"/>
    <property type="match status" value="1"/>
</dbReference>
<dbReference type="Pfam" id="PF01488">
    <property type="entry name" value="Shikimate_DH"/>
    <property type="match status" value="1"/>
</dbReference>
<dbReference type="PIRSF" id="PIRSF000445">
    <property type="entry name" value="4pyrrol_synth_GluRdtase"/>
    <property type="match status" value="1"/>
</dbReference>
<dbReference type="SUPFAM" id="SSF69742">
    <property type="entry name" value="Glutamyl tRNA-reductase catalytic, N-terminal domain"/>
    <property type="match status" value="1"/>
</dbReference>
<dbReference type="SUPFAM" id="SSF69075">
    <property type="entry name" value="Glutamyl tRNA-reductase dimerization domain"/>
    <property type="match status" value="1"/>
</dbReference>
<dbReference type="SUPFAM" id="SSF51735">
    <property type="entry name" value="NAD(P)-binding Rossmann-fold domains"/>
    <property type="match status" value="1"/>
</dbReference>
<dbReference type="PROSITE" id="PS00747">
    <property type="entry name" value="GLUTR"/>
    <property type="match status" value="1"/>
</dbReference>
<reference key="1">
    <citation type="journal article" date="2008" name="J. Bacteriol.">
        <title>Genome sequence of the fish pathogen Renibacterium salmoninarum suggests reductive evolution away from an environmental Arthrobacter ancestor.</title>
        <authorList>
            <person name="Wiens G.D."/>
            <person name="Rockey D.D."/>
            <person name="Wu Z."/>
            <person name="Chang J."/>
            <person name="Levy R."/>
            <person name="Crane S."/>
            <person name="Chen D.S."/>
            <person name="Capri G.R."/>
            <person name="Burnett J.R."/>
            <person name="Sudheesh P.S."/>
            <person name="Schipma M.J."/>
            <person name="Burd H."/>
            <person name="Bhattacharyya A."/>
            <person name="Rhodes L.D."/>
            <person name="Kaul R."/>
            <person name="Strom M.S."/>
        </authorList>
    </citation>
    <scope>NUCLEOTIDE SEQUENCE [LARGE SCALE GENOMIC DNA]</scope>
    <source>
        <strain>ATCC 33209 / DSM 20767 / JCM 11484 / NBRC 15589 / NCIMB 2235</strain>
    </source>
</reference>